<accession>A3CT00</accession>
<evidence type="ECO:0000255" key="1">
    <source>
        <dbReference type="HAMAP-Rule" id="MF_01320"/>
    </source>
</evidence>
<evidence type="ECO:0000256" key="2">
    <source>
        <dbReference type="SAM" id="MobiDB-lite"/>
    </source>
</evidence>
<evidence type="ECO:0000305" key="3"/>
<comment type="function">
    <text evidence="1">One of the primary rRNA binding proteins. Required for association of the 30S and 50S subunits to form the 70S ribosome, for tRNA binding and peptide bond formation. It has been suggested to have peptidyltransferase activity; this is somewhat controversial. Makes several contacts with the 16S rRNA in the 70S ribosome.</text>
</comment>
<comment type="subunit">
    <text evidence="1">Part of the 50S ribosomal subunit. Forms a bridge to the 30S subunit in the 70S ribosome.</text>
</comment>
<comment type="similarity">
    <text evidence="1">Belongs to the universal ribosomal protein uL2 family.</text>
</comment>
<reference key="1">
    <citation type="journal article" date="2009" name="Stand. Genomic Sci.">
        <title>Complete genome sequence of Methanoculleus marisnigri Romesser et al. 1981 type strain JR1.</title>
        <authorList>
            <person name="Anderson I.J."/>
            <person name="Sieprawska-Lupa M."/>
            <person name="Lapidus A."/>
            <person name="Nolan M."/>
            <person name="Copeland A."/>
            <person name="Glavina Del Rio T."/>
            <person name="Tice H."/>
            <person name="Dalin E."/>
            <person name="Barry K."/>
            <person name="Saunders E."/>
            <person name="Han C."/>
            <person name="Brettin T."/>
            <person name="Detter J.C."/>
            <person name="Bruce D."/>
            <person name="Mikhailova N."/>
            <person name="Pitluck S."/>
            <person name="Hauser L."/>
            <person name="Land M."/>
            <person name="Lucas S."/>
            <person name="Richardson P."/>
            <person name="Whitman W.B."/>
            <person name="Kyrpides N.C."/>
        </authorList>
    </citation>
    <scope>NUCLEOTIDE SEQUENCE [LARGE SCALE GENOMIC DNA]</scope>
    <source>
        <strain>ATCC 35101 / DSM 1498 / JR1</strain>
    </source>
</reference>
<name>RL2_METMJ</name>
<sequence>MAHRIIAQNRGKGGPTYRAPSHRYKAALRHAGKNDALVSGNVIDIEHDPARHAPIALARLDSGEKIYVLATEGLGVGDTVSWGTGGTVKNGNTLPLGEIPVGAYVCNIEARPNDGGKFVRSSGVQALVIGKADDGRVGIRMPSGKNKWFNGACMATVGIVAGGGRGEKPFVKAGKKHFHVRSSSERWPRVKGVCMNVIDHPFGGGGHQHCGRPKTVARGTSPGRKVGHVAARRTGKWKK</sequence>
<feature type="chain" id="PRO_0000310051" description="Large ribosomal subunit protein uL2">
    <location>
        <begin position="1"/>
        <end position="239"/>
    </location>
</feature>
<feature type="region of interest" description="Disordered" evidence="2">
    <location>
        <begin position="205"/>
        <end position="224"/>
    </location>
</feature>
<protein>
    <recommendedName>
        <fullName evidence="1">Large ribosomal subunit protein uL2</fullName>
    </recommendedName>
    <alternativeName>
        <fullName evidence="3">50S ribosomal protein L2</fullName>
    </alternativeName>
</protein>
<keyword id="KW-0687">Ribonucleoprotein</keyword>
<keyword id="KW-0689">Ribosomal protein</keyword>
<keyword id="KW-0694">RNA-binding</keyword>
<keyword id="KW-0699">rRNA-binding</keyword>
<organism>
    <name type="scientific">Methanoculleus marisnigri (strain ATCC 35101 / DSM 1498 / JR1)</name>
    <dbReference type="NCBI Taxonomy" id="368407"/>
    <lineage>
        <taxon>Archaea</taxon>
        <taxon>Methanobacteriati</taxon>
        <taxon>Methanobacteriota</taxon>
        <taxon>Stenosarchaea group</taxon>
        <taxon>Methanomicrobia</taxon>
        <taxon>Methanomicrobiales</taxon>
        <taxon>Methanomicrobiaceae</taxon>
        <taxon>Methanoculleus</taxon>
    </lineage>
</organism>
<dbReference type="EMBL" id="CP000562">
    <property type="protein sequence ID" value="ABN56500.1"/>
    <property type="molecule type" value="Genomic_DNA"/>
</dbReference>
<dbReference type="RefSeq" id="WP_011843410.1">
    <property type="nucleotide sequence ID" value="NC_009051.1"/>
</dbReference>
<dbReference type="SMR" id="A3CT00"/>
<dbReference type="STRING" id="368407.Memar_0567"/>
<dbReference type="GeneID" id="4846601"/>
<dbReference type="KEGG" id="mem:Memar_0567"/>
<dbReference type="eggNOG" id="arCOG04067">
    <property type="taxonomic scope" value="Archaea"/>
</dbReference>
<dbReference type="HOGENOM" id="CLU_036235_0_1_2"/>
<dbReference type="OrthoDB" id="5987at2157"/>
<dbReference type="Proteomes" id="UP000002146">
    <property type="component" value="Chromosome"/>
</dbReference>
<dbReference type="GO" id="GO:0022625">
    <property type="term" value="C:cytosolic large ribosomal subunit"/>
    <property type="evidence" value="ECO:0007669"/>
    <property type="project" value="TreeGrafter"/>
</dbReference>
<dbReference type="GO" id="GO:0019843">
    <property type="term" value="F:rRNA binding"/>
    <property type="evidence" value="ECO:0007669"/>
    <property type="project" value="UniProtKB-UniRule"/>
</dbReference>
<dbReference type="GO" id="GO:0003735">
    <property type="term" value="F:structural constituent of ribosome"/>
    <property type="evidence" value="ECO:0007669"/>
    <property type="project" value="InterPro"/>
</dbReference>
<dbReference type="GO" id="GO:0002181">
    <property type="term" value="P:cytoplasmic translation"/>
    <property type="evidence" value="ECO:0007669"/>
    <property type="project" value="TreeGrafter"/>
</dbReference>
<dbReference type="FunFam" id="4.10.950.10:FF:000002">
    <property type="entry name" value="60S ribosomal protein L2"/>
    <property type="match status" value="1"/>
</dbReference>
<dbReference type="Gene3D" id="2.30.30.30">
    <property type="match status" value="1"/>
</dbReference>
<dbReference type="Gene3D" id="2.40.50.140">
    <property type="entry name" value="Nucleic acid-binding proteins"/>
    <property type="match status" value="1"/>
</dbReference>
<dbReference type="Gene3D" id="4.10.950.10">
    <property type="entry name" value="Ribosomal protein L2, domain 3"/>
    <property type="match status" value="1"/>
</dbReference>
<dbReference type="HAMAP" id="MF_01320_A">
    <property type="entry name" value="Ribosomal_uL2_A"/>
    <property type="match status" value="1"/>
</dbReference>
<dbReference type="InterPro" id="IPR012340">
    <property type="entry name" value="NA-bd_OB-fold"/>
</dbReference>
<dbReference type="InterPro" id="IPR014722">
    <property type="entry name" value="Rib_uL2_dom2"/>
</dbReference>
<dbReference type="InterPro" id="IPR002171">
    <property type="entry name" value="Ribosomal_uL2"/>
</dbReference>
<dbReference type="InterPro" id="IPR023672">
    <property type="entry name" value="Ribosomal_uL2_arc_euk"/>
</dbReference>
<dbReference type="InterPro" id="IPR022669">
    <property type="entry name" value="Ribosomal_uL2_C"/>
</dbReference>
<dbReference type="InterPro" id="IPR014726">
    <property type="entry name" value="Ribosomal_uL2_dom3"/>
</dbReference>
<dbReference type="InterPro" id="IPR022666">
    <property type="entry name" value="Ribosomal_uL2_RNA-bd_dom"/>
</dbReference>
<dbReference type="InterPro" id="IPR008991">
    <property type="entry name" value="Translation_prot_SH3-like_sf"/>
</dbReference>
<dbReference type="NCBIfam" id="NF007180">
    <property type="entry name" value="PRK09612.1"/>
    <property type="match status" value="1"/>
</dbReference>
<dbReference type="PANTHER" id="PTHR13691:SF16">
    <property type="entry name" value="LARGE RIBOSOMAL SUBUNIT PROTEIN UL2"/>
    <property type="match status" value="1"/>
</dbReference>
<dbReference type="PANTHER" id="PTHR13691">
    <property type="entry name" value="RIBOSOMAL PROTEIN L2"/>
    <property type="match status" value="1"/>
</dbReference>
<dbReference type="Pfam" id="PF00181">
    <property type="entry name" value="Ribosomal_L2"/>
    <property type="match status" value="1"/>
</dbReference>
<dbReference type="Pfam" id="PF03947">
    <property type="entry name" value="Ribosomal_L2_C"/>
    <property type="match status" value="1"/>
</dbReference>
<dbReference type="PIRSF" id="PIRSF002158">
    <property type="entry name" value="Ribosomal_L2"/>
    <property type="match status" value="1"/>
</dbReference>
<dbReference type="SMART" id="SM01383">
    <property type="entry name" value="Ribosomal_L2"/>
    <property type="match status" value="1"/>
</dbReference>
<dbReference type="SMART" id="SM01382">
    <property type="entry name" value="Ribosomal_L2_C"/>
    <property type="match status" value="1"/>
</dbReference>
<dbReference type="SUPFAM" id="SSF50249">
    <property type="entry name" value="Nucleic acid-binding proteins"/>
    <property type="match status" value="1"/>
</dbReference>
<dbReference type="SUPFAM" id="SSF50104">
    <property type="entry name" value="Translation proteins SH3-like domain"/>
    <property type="match status" value="1"/>
</dbReference>
<gene>
    <name evidence="1" type="primary">rpl2</name>
    <name type="ordered locus">Memar_0567</name>
</gene>
<proteinExistence type="inferred from homology"/>